<dbReference type="EMBL" id="AY456388">
    <property type="protein sequence ID" value="AAR88652.1"/>
    <property type="molecule type" value="mRNA"/>
</dbReference>
<dbReference type="EMBL" id="AF225416">
    <property type="protein sequence ID" value="AAG09718.1"/>
    <property type="molecule type" value="mRNA"/>
</dbReference>
<dbReference type="EMBL" id="CR457197">
    <property type="protein sequence ID" value="CAG33478.1"/>
    <property type="molecule type" value="mRNA"/>
</dbReference>
<dbReference type="EMBL" id="AK291093">
    <property type="protein sequence ID" value="BAF83782.1"/>
    <property type="molecule type" value="mRNA"/>
</dbReference>
<dbReference type="EMBL" id="AC069137">
    <property type="protein sequence ID" value="AAY24098.1"/>
    <property type="molecule type" value="Genomic_DNA"/>
</dbReference>
<dbReference type="EMBL" id="CH471058">
    <property type="protein sequence ID" value="EAX11289.1"/>
    <property type="molecule type" value="Genomic_DNA"/>
</dbReference>
<dbReference type="EMBL" id="CH471058">
    <property type="protein sequence ID" value="EAX11290.1"/>
    <property type="molecule type" value="Genomic_DNA"/>
</dbReference>
<dbReference type="EMBL" id="BC022255">
    <property type="protein sequence ID" value="AAH22255.1"/>
    <property type="molecule type" value="mRNA"/>
</dbReference>
<dbReference type="CCDS" id="CCDS2229.1"/>
<dbReference type="RefSeq" id="NP_065726.1">
    <property type="nucleotide sequence ID" value="NM_020675.4"/>
</dbReference>
<dbReference type="PDB" id="2VE7">
    <property type="method" value="X-ray"/>
    <property type="resolution" value="2.88 A"/>
    <property type="chains" value="A/B=118-223"/>
</dbReference>
<dbReference type="PDB" id="3IZ0">
    <property type="method" value="EM"/>
    <property type="chains" value="C/E=118-223"/>
</dbReference>
<dbReference type="PDB" id="8PPR">
    <property type="method" value="EM"/>
    <property type="resolution" value="3.00 A"/>
    <property type="chains" value="G=1-224"/>
</dbReference>
<dbReference type="PDB" id="8Q5H">
    <property type="method" value="EM"/>
    <property type="resolution" value="4.50 A"/>
    <property type="chains" value="5=93-224"/>
</dbReference>
<dbReference type="PDBsum" id="2VE7"/>
<dbReference type="PDBsum" id="3IZ0"/>
<dbReference type="PDBsum" id="8PPR"/>
<dbReference type="PDBsum" id="8Q5H"/>
<dbReference type="EMDB" id="EMD-17814"/>
<dbReference type="EMDB" id="EMD-18179"/>
<dbReference type="EMDB" id="EMD-2549"/>
<dbReference type="SMR" id="Q9HBM1"/>
<dbReference type="BioGRID" id="121507">
    <property type="interactions" value="71"/>
</dbReference>
<dbReference type="ComplexPortal" id="CPX-550">
    <property type="entry name" value="Ndc80 complex"/>
</dbReference>
<dbReference type="CORUM" id="Q9HBM1"/>
<dbReference type="DIP" id="DIP-35753N"/>
<dbReference type="FunCoup" id="Q9HBM1">
    <property type="interactions" value="703"/>
</dbReference>
<dbReference type="IntAct" id="Q9HBM1">
    <property type="interactions" value="50"/>
</dbReference>
<dbReference type="MINT" id="Q9HBM1"/>
<dbReference type="STRING" id="9606.ENSP00000282074"/>
<dbReference type="CarbonylDB" id="Q9HBM1"/>
<dbReference type="GlyGen" id="Q9HBM1">
    <property type="glycosylation" value="1 site, 1 O-linked glycan (1 site)"/>
</dbReference>
<dbReference type="iPTMnet" id="Q9HBM1"/>
<dbReference type="PhosphoSitePlus" id="Q9HBM1"/>
<dbReference type="BioMuta" id="SPC25"/>
<dbReference type="DMDM" id="74734256"/>
<dbReference type="jPOST" id="Q9HBM1"/>
<dbReference type="MassIVE" id="Q9HBM1"/>
<dbReference type="PaxDb" id="9606-ENSP00000282074"/>
<dbReference type="PeptideAtlas" id="Q9HBM1"/>
<dbReference type="ProteomicsDB" id="81577"/>
<dbReference type="Pumba" id="Q9HBM1"/>
<dbReference type="Antibodypedia" id="33800">
    <property type="antibodies" value="215 antibodies from 23 providers"/>
</dbReference>
<dbReference type="DNASU" id="57405"/>
<dbReference type="Ensembl" id="ENST00000282074.7">
    <property type="protein sequence ID" value="ENSP00000282074.2"/>
    <property type="gene ID" value="ENSG00000152253.9"/>
</dbReference>
<dbReference type="Ensembl" id="ENST00000611144.4">
    <property type="protein sequence ID" value="ENSP00000481354.1"/>
    <property type="gene ID" value="ENSG00000277909.4"/>
</dbReference>
<dbReference type="Ensembl" id="ENST00000616584.1">
    <property type="protein sequence ID" value="ENSP00000483050.1"/>
    <property type="gene ID" value="ENSG00000277909.4"/>
</dbReference>
<dbReference type="GeneID" id="57405"/>
<dbReference type="KEGG" id="hsa:57405"/>
<dbReference type="MANE-Select" id="ENST00000282074.7">
    <property type="protein sequence ID" value="ENSP00000282074.2"/>
    <property type="RefSeq nucleotide sequence ID" value="NM_020675.4"/>
    <property type="RefSeq protein sequence ID" value="NP_065726.1"/>
</dbReference>
<dbReference type="UCSC" id="uc002uel.4">
    <property type="organism name" value="human"/>
</dbReference>
<dbReference type="AGR" id="HGNC:24031"/>
<dbReference type="CTD" id="57405"/>
<dbReference type="DisGeNET" id="57405"/>
<dbReference type="GeneCards" id="SPC25"/>
<dbReference type="HGNC" id="HGNC:24031">
    <property type="gene designation" value="SPC25"/>
</dbReference>
<dbReference type="HPA" id="ENSG00000152253">
    <property type="expression patterns" value="Tissue enhanced (lymphoid)"/>
</dbReference>
<dbReference type="MIM" id="609395">
    <property type="type" value="gene"/>
</dbReference>
<dbReference type="neXtProt" id="NX_Q9HBM1"/>
<dbReference type="OpenTargets" id="ENSG00000152253"/>
<dbReference type="PharmGKB" id="PA162404413"/>
<dbReference type="VEuPathDB" id="HostDB:ENSG00000152253"/>
<dbReference type="eggNOG" id="KOG4657">
    <property type="taxonomic scope" value="Eukaryota"/>
</dbReference>
<dbReference type="GeneTree" id="ENSGT00390000002220"/>
<dbReference type="HOGENOM" id="CLU_102420_0_0_1"/>
<dbReference type="InParanoid" id="Q9HBM1"/>
<dbReference type="OMA" id="KNINEFW"/>
<dbReference type="OrthoDB" id="6353017at2759"/>
<dbReference type="PAN-GO" id="Q9HBM1">
    <property type="GO annotations" value="2 GO annotations based on evolutionary models"/>
</dbReference>
<dbReference type="PhylomeDB" id="Q9HBM1"/>
<dbReference type="TreeFam" id="TF332941"/>
<dbReference type="PathwayCommons" id="Q9HBM1"/>
<dbReference type="Reactome" id="R-HSA-141444">
    <property type="pathway name" value="Amplification of signal from unattached kinetochores via a MAD2 inhibitory signal"/>
</dbReference>
<dbReference type="Reactome" id="R-HSA-2467813">
    <property type="pathway name" value="Separation of Sister Chromatids"/>
</dbReference>
<dbReference type="Reactome" id="R-HSA-2500257">
    <property type="pathway name" value="Resolution of Sister Chromatid Cohesion"/>
</dbReference>
<dbReference type="Reactome" id="R-HSA-5663220">
    <property type="pathway name" value="RHO GTPases Activate Formins"/>
</dbReference>
<dbReference type="Reactome" id="R-HSA-68877">
    <property type="pathway name" value="Mitotic Prometaphase"/>
</dbReference>
<dbReference type="Reactome" id="R-HSA-9648025">
    <property type="pathway name" value="EML4 and NUDC in mitotic spindle formation"/>
</dbReference>
<dbReference type="SignaLink" id="Q9HBM1"/>
<dbReference type="SIGNOR" id="Q9HBM1"/>
<dbReference type="BioGRID-ORCS" id="57405">
    <property type="hits" value="814 hits in 1164 CRISPR screens"/>
</dbReference>
<dbReference type="ChiTaRS" id="SPC25">
    <property type="organism name" value="human"/>
</dbReference>
<dbReference type="EvolutionaryTrace" id="Q9HBM1"/>
<dbReference type="GenomeRNAi" id="57405"/>
<dbReference type="Pharos" id="Q9HBM1">
    <property type="development level" value="Tbio"/>
</dbReference>
<dbReference type="PRO" id="PR:Q9HBM1"/>
<dbReference type="Proteomes" id="UP000005640">
    <property type="component" value="Chromosome 2"/>
</dbReference>
<dbReference type="RNAct" id="Q9HBM1">
    <property type="molecule type" value="protein"/>
</dbReference>
<dbReference type="Bgee" id="ENSG00000152253">
    <property type="expression patterns" value="Expressed in ventricular zone and 103 other cell types or tissues"/>
</dbReference>
<dbReference type="ExpressionAtlas" id="Q9HBM1">
    <property type="expression patterns" value="baseline and differential"/>
</dbReference>
<dbReference type="GO" id="GO:0005829">
    <property type="term" value="C:cytosol"/>
    <property type="evidence" value="ECO:0000314"/>
    <property type="project" value="HPA"/>
</dbReference>
<dbReference type="GO" id="GO:0000776">
    <property type="term" value="C:kinetochore"/>
    <property type="evidence" value="ECO:0000314"/>
    <property type="project" value="UniProtKB"/>
</dbReference>
<dbReference type="GO" id="GO:0031262">
    <property type="term" value="C:Ndc80 complex"/>
    <property type="evidence" value="ECO:0000314"/>
    <property type="project" value="UniProtKB"/>
</dbReference>
<dbReference type="GO" id="GO:0005634">
    <property type="term" value="C:nucleus"/>
    <property type="evidence" value="ECO:0007669"/>
    <property type="project" value="UniProtKB-SubCell"/>
</dbReference>
<dbReference type="GO" id="GO:0000940">
    <property type="term" value="C:outer kinetochore"/>
    <property type="evidence" value="ECO:0000314"/>
    <property type="project" value="UniProtKB"/>
</dbReference>
<dbReference type="GO" id="GO:0008608">
    <property type="term" value="P:attachment of spindle microtubules to kinetochore"/>
    <property type="evidence" value="ECO:0000314"/>
    <property type="project" value="ComplexPortal"/>
</dbReference>
<dbReference type="GO" id="GO:0051301">
    <property type="term" value="P:cell division"/>
    <property type="evidence" value="ECO:0007669"/>
    <property type="project" value="UniProtKB-KW"/>
</dbReference>
<dbReference type="GO" id="GO:0007059">
    <property type="term" value="P:chromosome segregation"/>
    <property type="evidence" value="ECO:0000315"/>
    <property type="project" value="UniProtKB"/>
</dbReference>
<dbReference type="GO" id="GO:0007094">
    <property type="term" value="P:mitotic spindle assembly checkpoint signaling"/>
    <property type="evidence" value="ECO:0000303"/>
    <property type="project" value="ComplexPortal"/>
</dbReference>
<dbReference type="GO" id="GO:0007052">
    <property type="term" value="P:mitotic spindle organization"/>
    <property type="evidence" value="ECO:0000315"/>
    <property type="project" value="UniProtKB"/>
</dbReference>
<dbReference type="CDD" id="cd23784">
    <property type="entry name" value="RWD_Spc25"/>
    <property type="match status" value="1"/>
</dbReference>
<dbReference type="Gene3D" id="6.10.250.1950">
    <property type="match status" value="1"/>
</dbReference>
<dbReference type="IDEAL" id="IID00395"/>
<dbReference type="InterPro" id="IPR045143">
    <property type="entry name" value="Spc25"/>
</dbReference>
<dbReference type="InterPro" id="IPR013255">
    <property type="entry name" value="Spc25_C"/>
</dbReference>
<dbReference type="PANTHER" id="PTHR14281:SF0">
    <property type="entry name" value="KINETOCHORE PROTEIN SPC25"/>
    <property type="match status" value="1"/>
</dbReference>
<dbReference type="PANTHER" id="PTHR14281">
    <property type="entry name" value="KINETOCHORE PROTEIN SPC25-RELATED"/>
    <property type="match status" value="1"/>
</dbReference>
<dbReference type="Pfam" id="PF08234">
    <property type="entry name" value="Spindle_Spc25"/>
    <property type="match status" value="1"/>
</dbReference>
<sequence>MVEDELALFDKSINEFWNKFKSTDTSCQMAGLRDTYKDSIKAFAEKLSVKLKEEERMVEMFLEYQNQISRQNKLIQEKKDNLLKLIAEVKGKKQELEVLTANIQDLKEEYSRKKETISTANKANAERLKRLQKSADLYKDRLGLEIRKIYGEKLQFIFTNIDPKNPESPFMFSLHLNEARDYEVSDSAPHLEGLAEFQENVRKTNNFSAFLANVRKAFTATVYN</sequence>
<evidence type="ECO:0000255" key="1"/>
<evidence type="ECO:0000269" key="2">
    <source>
    </source>
</evidence>
<evidence type="ECO:0000269" key="3">
    <source>
    </source>
</evidence>
<evidence type="ECO:0000269" key="4">
    <source>
    </source>
</evidence>
<evidence type="ECO:0000269" key="5">
    <source>
    </source>
</evidence>
<evidence type="ECO:0000305" key="6"/>
<evidence type="ECO:0007744" key="7">
    <source>
    </source>
</evidence>
<evidence type="ECO:0007744" key="8">
    <source>
    </source>
</evidence>
<evidence type="ECO:0007829" key="9">
    <source>
        <dbReference type="PDB" id="2VE7"/>
    </source>
</evidence>
<evidence type="ECO:0007829" key="10">
    <source>
        <dbReference type="PDB" id="8PPR"/>
    </source>
</evidence>
<accession>Q9HBM1</accession>
<accession>A8K4X8</accession>
<accession>D3DPC0</accession>
<proteinExistence type="evidence at protein level"/>
<organism>
    <name type="scientific">Homo sapiens</name>
    <name type="common">Human</name>
    <dbReference type="NCBI Taxonomy" id="9606"/>
    <lineage>
        <taxon>Eukaryota</taxon>
        <taxon>Metazoa</taxon>
        <taxon>Chordata</taxon>
        <taxon>Craniata</taxon>
        <taxon>Vertebrata</taxon>
        <taxon>Euteleostomi</taxon>
        <taxon>Mammalia</taxon>
        <taxon>Eutheria</taxon>
        <taxon>Euarchontoglires</taxon>
        <taxon>Primates</taxon>
        <taxon>Haplorrhini</taxon>
        <taxon>Catarrhini</taxon>
        <taxon>Hominidae</taxon>
        <taxon>Homo</taxon>
    </lineage>
</organism>
<keyword id="KW-0002">3D-structure</keyword>
<keyword id="KW-0131">Cell cycle</keyword>
<keyword id="KW-0132">Cell division</keyword>
<keyword id="KW-0137">Centromere</keyword>
<keyword id="KW-0158">Chromosome</keyword>
<keyword id="KW-0175">Coiled coil</keyword>
<keyword id="KW-0995">Kinetochore</keyword>
<keyword id="KW-0498">Mitosis</keyword>
<keyword id="KW-0539">Nucleus</keyword>
<keyword id="KW-0597">Phosphoprotein</keyword>
<keyword id="KW-1267">Proteomics identification</keyword>
<keyword id="KW-1185">Reference proteome</keyword>
<protein>
    <recommendedName>
        <fullName>Kinetochore protein Spc25</fullName>
        <shortName>hSpc25</shortName>
    </recommendedName>
</protein>
<gene>
    <name type="primary">SPC25</name>
    <name type="synonym">SPBC25</name>
    <name type="ORF">AD024</name>
</gene>
<comment type="function">
    <text evidence="2 3 5">Acts as a component of the essential kinetochore-associated NDC80 complex, which is required for chromosome segregation and spindle checkpoint activity (PubMed:14699129, PubMed:14738735). Required for kinetochore integrity and the organization of stable microtubule binding sites in the outer plate of the kinetochore (PubMed:14699129, PubMed:14738735). The NDC80 complex synergistically enhances the affinity of the SKA1 complex for microtubules and may allow the NDC80 complex to track depolymerizing microtubules (PubMed:23085020).</text>
</comment>
<comment type="subunit">
    <text evidence="2">Component of the NDC80 complex, which consists of NDC80/HEC1, CDCA1, SPBC24 and SPBC25. The NDC80 complex is formed by two subcomplexes composed of NDC80/HEC1-CDCA1 and SPBC24-SPBC25. Each subcomplex is formed by parallel interactions through the coiled-coil domains of individual subunits. Formation of a tetrameric complex is mediated by interactions between the C-terminal regions of both subunits of the NDC80/HEC1-CDCA1 subcomplex and the N-terminal regions of both subunits of the SPBC24-SPBC25 complex. The tetrameric NDC80 complex has an elongated rod-like structure with globular domains at either end.</text>
</comment>
<comment type="interaction">
    <interactant intactId="EBI-999909">
        <id>Q9HBM1</id>
    </interactant>
    <interactant intactId="EBI-740220">
        <id>O14964</id>
        <label>HGS</label>
    </interactant>
    <organismsDiffer>false</organismsDiffer>
    <experiments>3</experiments>
</comment>
<comment type="interaction">
    <interactant intactId="EBI-999909">
        <id>Q9HBM1</id>
    </interactant>
    <interactant intactId="EBI-715849">
        <id>O14777</id>
        <label>NDC80</label>
    </interactant>
    <organismsDiffer>false</organismsDiffer>
    <experiments>15</experiments>
</comment>
<comment type="interaction">
    <interactant intactId="EBI-999909">
        <id>Q9HBM1</id>
    </interactant>
    <interactant intactId="EBI-999900">
        <id>Q8NBT2</id>
        <label>SPC24</label>
    </interactant>
    <organismsDiffer>false</organismsDiffer>
    <experiments>16</experiments>
</comment>
<comment type="subcellular location">
    <subcellularLocation>
        <location>Nucleus</location>
    </subcellularLocation>
    <subcellularLocation>
        <location evidence="2 3 4">Chromosome</location>
        <location evidence="2 3 4">Centromere</location>
        <location evidence="2 3 4">Kinetochore</location>
    </subcellularLocation>
    <text evidence="2 3">Localizes to kinetochores from late prophase to anaphase (PubMed:14738735). Localizes specifically to the outer plate of the kinetochore (PubMed:14699129, PubMed:14738735).</text>
</comment>
<comment type="similarity">
    <text evidence="6">Belongs to the SPC25 family.</text>
</comment>
<name>SPC25_HUMAN</name>
<reference key="1">
    <citation type="journal article" date="2004" name="Curr. Biol.">
        <title>The vertebrate Ndc80 complex contains Spc24 and Spc25 homologs, which are required to establish and maintain kinetochore-microtubule attachment.</title>
        <authorList>
            <person name="McCleland M.L."/>
            <person name="Kallio M.J."/>
            <person name="Barrett-Wilt G.A."/>
            <person name="Kestner C.A."/>
            <person name="Shabanowitz J."/>
            <person name="Hunt D.F."/>
            <person name="Gorbsky G.J."/>
            <person name="Stukenberg P.T."/>
        </authorList>
    </citation>
    <scope>NUCLEOTIDE SEQUENCE [MRNA]</scope>
    <scope>FUNCTION</scope>
    <scope>SUBCELLULAR LOCATION</scope>
</reference>
<reference key="2">
    <citation type="submission" date="2000-01" db="EMBL/GenBank/DDBJ databases">
        <authorList>
            <person name="Xiao H."/>
            <person name="Song H."/>
            <person name="Gao G."/>
            <person name="Ren S."/>
            <person name="Chen Z."/>
            <person name="Han Z."/>
        </authorList>
    </citation>
    <scope>NUCLEOTIDE SEQUENCE [LARGE SCALE MRNA]</scope>
    <source>
        <tissue>Adrenal gland</tissue>
    </source>
</reference>
<reference key="3">
    <citation type="submission" date="2004-06" db="EMBL/GenBank/DDBJ databases">
        <title>Cloning of human full open reading frames in Gateway(TM) system entry vector (pDONR201).</title>
        <authorList>
            <person name="Ebert L."/>
            <person name="Schick M."/>
            <person name="Neubert P."/>
            <person name="Schatten R."/>
            <person name="Henze S."/>
            <person name="Korn B."/>
        </authorList>
    </citation>
    <scope>NUCLEOTIDE SEQUENCE [LARGE SCALE MRNA]</scope>
</reference>
<reference key="4">
    <citation type="journal article" date="2004" name="Nat. Genet.">
        <title>Complete sequencing and characterization of 21,243 full-length human cDNAs.</title>
        <authorList>
            <person name="Ota T."/>
            <person name="Suzuki Y."/>
            <person name="Nishikawa T."/>
            <person name="Otsuki T."/>
            <person name="Sugiyama T."/>
            <person name="Irie R."/>
            <person name="Wakamatsu A."/>
            <person name="Hayashi K."/>
            <person name="Sato H."/>
            <person name="Nagai K."/>
            <person name="Kimura K."/>
            <person name="Makita H."/>
            <person name="Sekine M."/>
            <person name="Obayashi M."/>
            <person name="Nishi T."/>
            <person name="Shibahara T."/>
            <person name="Tanaka T."/>
            <person name="Ishii S."/>
            <person name="Yamamoto J."/>
            <person name="Saito K."/>
            <person name="Kawai Y."/>
            <person name="Isono Y."/>
            <person name="Nakamura Y."/>
            <person name="Nagahari K."/>
            <person name="Murakami K."/>
            <person name="Yasuda T."/>
            <person name="Iwayanagi T."/>
            <person name="Wagatsuma M."/>
            <person name="Shiratori A."/>
            <person name="Sudo H."/>
            <person name="Hosoiri T."/>
            <person name="Kaku Y."/>
            <person name="Kodaira H."/>
            <person name="Kondo H."/>
            <person name="Sugawara M."/>
            <person name="Takahashi M."/>
            <person name="Kanda K."/>
            <person name="Yokoi T."/>
            <person name="Furuya T."/>
            <person name="Kikkawa E."/>
            <person name="Omura Y."/>
            <person name="Abe K."/>
            <person name="Kamihara K."/>
            <person name="Katsuta N."/>
            <person name="Sato K."/>
            <person name="Tanikawa M."/>
            <person name="Yamazaki M."/>
            <person name="Ninomiya K."/>
            <person name="Ishibashi T."/>
            <person name="Yamashita H."/>
            <person name="Murakawa K."/>
            <person name="Fujimori K."/>
            <person name="Tanai H."/>
            <person name="Kimata M."/>
            <person name="Watanabe M."/>
            <person name="Hiraoka S."/>
            <person name="Chiba Y."/>
            <person name="Ishida S."/>
            <person name="Ono Y."/>
            <person name="Takiguchi S."/>
            <person name="Watanabe S."/>
            <person name="Yosida M."/>
            <person name="Hotuta T."/>
            <person name="Kusano J."/>
            <person name="Kanehori K."/>
            <person name="Takahashi-Fujii A."/>
            <person name="Hara H."/>
            <person name="Tanase T.-O."/>
            <person name="Nomura Y."/>
            <person name="Togiya S."/>
            <person name="Komai F."/>
            <person name="Hara R."/>
            <person name="Takeuchi K."/>
            <person name="Arita M."/>
            <person name="Imose N."/>
            <person name="Musashino K."/>
            <person name="Yuuki H."/>
            <person name="Oshima A."/>
            <person name="Sasaki N."/>
            <person name="Aotsuka S."/>
            <person name="Yoshikawa Y."/>
            <person name="Matsunawa H."/>
            <person name="Ichihara T."/>
            <person name="Shiohata N."/>
            <person name="Sano S."/>
            <person name="Moriya S."/>
            <person name="Momiyama H."/>
            <person name="Satoh N."/>
            <person name="Takami S."/>
            <person name="Terashima Y."/>
            <person name="Suzuki O."/>
            <person name="Nakagawa S."/>
            <person name="Senoh A."/>
            <person name="Mizoguchi H."/>
            <person name="Goto Y."/>
            <person name="Shimizu F."/>
            <person name="Wakebe H."/>
            <person name="Hishigaki H."/>
            <person name="Watanabe T."/>
            <person name="Sugiyama A."/>
            <person name="Takemoto M."/>
            <person name="Kawakami B."/>
            <person name="Yamazaki M."/>
            <person name="Watanabe K."/>
            <person name="Kumagai A."/>
            <person name="Itakura S."/>
            <person name="Fukuzumi Y."/>
            <person name="Fujimori Y."/>
            <person name="Komiyama M."/>
            <person name="Tashiro H."/>
            <person name="Tanigami A."/>
            <person name="Fujiwara T."/>
            <person name="Ono T."/>
            <person name="Yamada K."/>
            <person name="Fujii Y."/>
            <person name="Ozaki K."/>
            <person name="Hirao M."/>
            <person name="Ohmori Y."/>
            <person name="Kawabata A."/>
            <person name="Hikiji T."/>
            <person name="Kobatake N."/>
            <person name="Inagaki H."/>
            <person name="Ikema Y."/>
            <person name="Okamoto S."/>
            <person name="Okitani R."/>
            <person name="Kawakami T."/>
            <person name="Noguchi S."/>
            <person name="Itoh T."/>
            <person name="Shigeta K."/>
            <person name="Senba T."/>
            <person name="Matsumura K."/>
            <person name="Nakajima Y."/>
            <person name="Mizuno T."/>
            <person name="Morinaga M."/>
            <person name="Sasaki M."/>
            <person name="Togashi T."/>
            <person name="Oyama M."/>
            <person name="Hata H."/>
            <person name="Watanabe M."/>
            <person name="Komatsu T."/>
            <person name="Mizushima-Sugano J."/>
            <person name="Satoh T."/>
            <person name="Shirai Y."/>
            <person name="Takahashi Y."/>
            <person name="Nakagawa K."/>
            <person name="Okumura K."/>
            <person name="Nagase T."/>
            <person name="Nomura N."/>
            <person name="Kikuchi H."/>
            <person name="Masuho Y."/>
            <person name="Yamashita R."/>
            <person name="Nakai K."/>
            <person name="Yada T."/>
            <person name="Nakamura Y."/>
            <person name="Ohara O."/>
            <person name="Isogai T."/>
            <person name="Sugano S."/>
        </authorList>
    </citation>
    <scope>NUCLEOTIDE SEQUENCE [LARGE SCALE MRNA]</scope>
</reference>
<reference key="5">
    <citation type="journal article" date="2005" name="Nature">
        <title>Generation and annotation of the DNA sequences of human chromosomes 2 and 4.</title>
        <authorList>
            <person name="Hillier L.W."/>
            <person name="Graves T.A."/>
            <person name="Fulton R.S."/>
            <person name="Fulton L.A."/>
            <person name="Pepin K.H."/>
            <person name="Minx P."/>
            <person name="Wagner-McPherson C."/>
            <person name="Layman D."/>
            <person name="Wylie K."/>
            <person name="Sekhon M."/>
            <person name="Becker M.C."/>
            <person name="Fewell G.A."/>
            <person name="Delehaunty K.D."/>
            <person name="Miner T.L."/>
            <person name="Nash W.E."/>
            <person name="Kremitzki C."/>
            <person name="Oddy L."/>
            <person name="Du H."/>
            <person name="Sun H."/>
            <person name="Bradshaw-Cordum H."/>
            <person name="Ali J."/>
            <person name="Carter J."/>
            <person name="Cordes M."/>
            <person name="Harris A."/>
            <person name="Isak A."/>
            <person name="van Brunt A."/>
            <person name="Nguyen C."/>
            <person name="Du F."/>
            <person name="Courtney L."/>
            <person name="Kalicki J."/>
            <person name="Ozersky P."/>
            <person name="Abbott S."/>
            <person name="Armstrong J."/>
            <person name="Belter E.A."/>
            <person name="Caruso L."/>
            <person name="Cedroni M."/>
            <person name="Cotton M."/>
            <person name="Davidson T."/>
            <person name="Desai A."/>
            <person name="Elliott G."/>
            <person name="Erb T."/>
            <person name="Fronick C."/>
            <person name="Gaige T."/>
            <person name="Haakenson W."/>
            <person name="Haglund K."/>
            <person name="Holmes A."/>
            <person name="Harkins R."/>
            <person name="Kim K."/>
            <person name="Kruchowski S.S."/>
            <person name="Strong C.M."/>
            <person name="Grewal N."/>
            <person name="Goyea E."/>
            <person name="Hou S."/>
            <person name="Levy A."/>
            <person name="Martinka S."/>
            <person name="Mead K."/>
            <person name="McLellan M.D."/>
            <person name="Meyer R."/>
            <person name="Randall-Maher J."/>
            <person name="Tomlinson C."/>
            <person name="Dauphin-Kohlberg S."/>
            <person name="Kozlowicz-Reilly A."/>
            <person name="Shah N."/>
            <person name="Swearengen-Shahid S."/>
            <person name="Snider J."/>
            <person name="Strong J.T."/>
            <person name="Thompson J."/>
            <person name="Yoakum M."/>
            <person name="Leonard S."/>
            <person name="Pearman C."/>
            <person name="Trani L."/>
            <person name="Radionenko M."/>
            <person name="Waligorski J.E."/>
            <person name="Wang C."/>
            <person name="Rock S.M."/>
            <person name="Tin-Wollam A.-M."/>
            <person name="Maupin R."/>
            <person name="Latreille P."/>
            <person name="Wendl M.C."/>
            <person name="Yang S.-P."/>
            <person name="Pohl C."/>
            <person name="Wallis J.W."/>
            <person name="Spieth J."/>
            <person name="Bieri T.A."/>
            <person name="Berkowicz N."/>
            <person name="Nelson J.O."/>
            <person name="Osborne J."/>
            <person name="Ding L."/>
            <person name="Meyer R."/>
            <person name="Sabo A."/>
            <person name="Shotland Y."/>
            <person name="Sinha P."/>
            <person name="Wohldmann P.E."/>
            <person name="Cook L.L."/>
            <person name="Hickenbotham M.T."/>
            <person name="Eldred J."/>
            <person name="Williams D."/>
            <person name="Jones T.A."/>
            <person name="She X."/>
            <person name="Ciccarelli F.D."/>
            <person name="Izaurralde E."/>
            <person name="Taylor J."/>
            <person name="Schmutz J."/>
            <person name="Myers R.M."/>
            <person name="Cox D.R."/>
            <person name="Huang X."/>
            <person name="McPherson J.D."/>
            <person name="Mardis E.R."/>
            <person name="Clifton S.W."/>
            <person name="Warren W.C."/>
            <person name="Chinwalla A.T."/>
            <person name="Eddy S.R."/>
            <person name="Marra M.A."/>
            <person name="Ovcharenko I."/>
            <person name="Furey T.S."/>
            <person name="Miller W."/>
            <person name="Eichler E.E."/>
            <person name="Bork P."/>
            <person name="Suyama M."/>
            <person name="Torrents D."/>
            <person name="Waterston R.H."/>
            <person name="Wilson R.K."/>
        </authorList>
    </citation>
    <scope>NUCLEOTIDE SEQUENCE [LARGE SCALE GENOMIC DNA]</scope>
</reference>
<reference key="6">
    <citation type="submission" date="2005-09" db="EMBL/GenBank/DDBJ databases">
        <authorList>
            <person name="Mural R.J."/>
            <person name="Istrail S."/>
            <person name="Sutton G.G."/>
            <person name="Florea L."/>
            <person name="Halpern A.L."/>
            <person name="Mobarry C.M."/>
            <person name="Lippert R."/>
            <person name="Walenz B."/>
            <person name="Shatkay H."/>
            <person name="Dew I."/>
            <person name="Miller J.R."/>
            <person name="Flanigan M.J."/>
            <person name="Edwards N.J."/>
            <person name="Bolanos R."/>
            <person name="Fasulo D."/>
            <person name="Halldorsson B.V."/>
            <person name="Hannenhalli S."/>
            <person name="Turner R."/>
            <person name="Yooseph S."/>
            <person name="Lu F."/>
            <person name="Nusskern D.R."/>
            <person name="Shue B.C."/>
            <person name="Zheng X.H."/>
            <person name="Zhong F."/>
            <person name="Delcher A.L."/>
            <person name="Huson D.H."/>
            <person name="Kravitz S.A."/>
            <person name="Mouchard L."/>
            <person name="Reinert K."/>
            <person name="Remington K.A."/>
            <person name="Clark A.G."/>
            <person name="Waterman M.S."/>
            <person name="Eichler E.E."/>
            <person name="Adams M.D."/>
            <person name="Hunkapiller M.W."/>
            <person name="Myers E.W."/>
            <person name="Venter J.C."/>
        </authorList>
    </citation>
    <scope>NUCLEOTIDE SEQUENCE [LARGE SCALE GENOMIC DNA]</scope>
</reference>
<reference key="7">
    <citation type="journal article" date="2004" name="Genome Res.">
        <title>The status, quality, and expansion of the NIH full-length cDNA project: the Mammalian Gene Collection (MGC).</title>
        <authorList>
            <consortium name="The MGC Project Team"/>
        </authorList>
    </citation>
    <scope>NUCLEOTIDE SEQUENCE [LARGE SCALE MRNA]</scope>
    <source>
        <tissue>Prostate</tissue>
    </source>
</reference>
<reference key="8">
    <citation type="journal article" date="2004" name="J. Biol. Chem.">
        <title>Identification of two novel components of the human NDC80 kinetochore complex.</title>
        <authorList>
            <person name="Bharadwaj R."/>
            <person name="Qi W."/>
            <person name="Yu H."/>
        </authorList>
    </citation>
    <scope>FUNCTION</scope>
    <scope>IDENTIFICATION BY MASS SPECTROMETRY</scope>
    <scope>IDENTIFICATION IN THE NDC80 COMPLEX</scope>
    <scope>SUBCELLULAR LOCATION</scope>
</reference>
<reference key="9">
    <citation type="journal article" date="2005" name="J. Biol. Chem.">
        <title>Architecture of the human Ndc80-Hec1 complex, a critical constituent of the outer kinetochore.</title>
        <authorList>
            <person name="Ciferri C."/>
            <person name="De Luca J."/>
            <person name="Monzani S."/>
            <person name="Ferrari K.J."/>
            <person name="Ristic D."/>
            <person name="Wyman C."/>
            <person name="Stark H."/>
            <person name="Kilmartin J."/>
            <person name="Salmon E.D."/>
            <person name="Musacchio A."/>
        </authorList>
    </citation>
    <scope>CHARACTERIZATION OF THE NDC80 COMPLEX</scope>
    <scope>SUBCELLULAR LOCATION</scope>
</reference>
<reference key="10">
    <citation type="journal article" date="2010" name="Sci. Signal.">
        <title>Quantitative phosphoproteomics reveals widespread full phosphorylation site occupancy during mitosis.</title>
        <authorList>
            <person name="Olsen J.V."/>
            <person name="Vermeulen M."/>
            <person name="Santamaria A."/>
            <person name="Kumar C."/>
            <person name="Miller M.L."/>
            <person name="Jensen L.J."/>
            <person name="Gnad F."/>
            <person name="Cox J."/>
            <person name="Jensen T.S."/>
            <person name="Nigg E.A."/>
            <person name="Brunak S."/>
            <person name="Mann M."/>
        </authorList>
    </citation>
    <scope>PHOSPHORYLATION [LARGE SCALE ANALYSIS] AT SER-12</scope>
    <scope>IDENTIFICATION BY MASS SPECTROMETRY [LARGE SCALE ANALYSIS]</scope>
    <source>
        <tissue>Cervix carcinoma</tissue>
    </source>
</reference>
<reference key="11">
    <citation type="journal article" date="2011" name="BMC Syst. Biol.">
        <title>Initial characterization of the human central proteome.</title>
        <authorList>
            <person name="Burkard T.R."/>
            <person name="Planyavsky M."/>
            <person name="Kaupe I."/>
            <person name="Breitwieser F.P."/>
            <person name="Buerckstuemmer T."/>
            <person name="Bennett K.L."/>
            <person name="Superti-Furga G."/>
            <person name="Colinge J."/>
        </authorList>
    </citation>
    <scope>IDENTIFICATION BY MASS SPECTROMETRY [LARGE SCALE ANALYSIS]</scope>
</reference>
<reference key="12">
    <citation type="journal article" date="2012" name="Dev. Cell">
        <title>The kinetochore-bound Ska1 complex tracks depolymerizing microtubules and binds to curved protofilaments.</title>
        <authorList>
            <person name="Schmidt J.C."/>
            <person name="Arthanari H."/>
            <person name="Boeszoermenyi A."/>
            <person name="Dashkevich N.M."/>
            <person name="Wilson-Kubalek E.M."/>
            <person name="Monnier N."/>
            <person name="Markus M."/>
            <person name="Oberer M."/>
            <person name="Milligan R.A."/>
            <person name="Bathe M."/>
            <person name="Wagner G."/>
            <person name="Grishchuk E.L."/>
            <person name="Cheeseman I.M."/>
        </authorList>
    </citation>
    <scope>FUNCTION</scope>
</reference>
<reference key="13">
    <citation type="journal article" date="2013" name="J. Proteome Res.">
        <title>Toward a comprehensive characterization of a human cancer cell phosphoproteome.</title>
        <authorList>
            <person name="Zhou H."/>
            <person name="Di Palma S."/>
            <person name="Preisinger C."/>
            <person name="Peng M."/>
            <person name="Polat A.N."/>
            <person name="Heck A.J."/>
            <person name="Mohammed S."/>
        </authorList>
    </citation>
    <scope>PHOSPHORYLATION [LARGE SCALE ANALYSIS] AT SER-12</scope>
    <scope>IDENTIFICATION BY MASS SPECTROMETRY [LARGE SCALE ANALYSIS]</scope>
    <source>
        <tissue>Erythroleukemia</tissue>
    </source>
</reference>
<feature type="chain" id="PRO_0000249565" description="Kinetochore protein Spc25">
    <location>
        <begin position="1"/>
        <end position="224"/>
    </location>
</feature>
<feature type="region of interest" description="Interaction with the N-terminus of SPBC24">
    <location>
        <begin position="1"/>
        <end position="144"/>
    </location>
</feature>
<feature type="region of interest" description="Interaction with the NDC80-NUF2 subcomplex">
    <location>
        <begin position="1"/>
        <end position="56"/>
    </location>
</feature>
<feature type="region of interest" description="Interaction with the C-terminus of SPBC24">
    <location>
        <begin position="145"/>
        <end position="224"/>
    </location>
</feature>
<feature type="coiled-coil region" evidence="1">
    <location>
        <begin position="61"/>
        <end position="142"/>
    </location>
</feature>
<feature type="modified residue" description="Phosphoserine" evidence="7 8">
    <location>
        <position position="12"/>
    </location>
</feature>
<feature type="helix" evidence="9">
    <location>
        <begin position="118"/>
        <end position="125"/>
    </location>
</feature>
<feature type="turn" evidence="9">
    <location>
        <begin position="126"/>
        <end position="130"/>
    </location>
</feature>
<feature type="helix" evidence="9">
    <location>
        <begin position="131"/>
        <end position="141"/>
    </location>
</feature>
<feature type="strand" evidence="10">
    <location>
        <begin position="145"/>
        <end position="149"/>
    </location>
</feature>
<feature type="turn" evidence="10">
    <location>
        <begin position="150"/>
        <end position="152"/>
    </location>
</feature>
<feature type="strand" evidence="9">
    <location>
        <begin position="154"/>
        <end position="157"/>
    </location>
</feature>
<feature type="strand" evidence="10">
    <location>
        <begin position="162"/>
        <end position="164"/>
    </location>
</feature>
<feature type="strand" evidence="9">
    <location>
        <begin position="171"/>
        <end position="175"/>
    </location>
</feature>
<feature type="strand" evidence="9">
    <location>
        <begin position="177"/>
        <end position="180"/>
    </location>
</feature>
<feature type="strand" evidence="10">
    <location>
        <begin position="182"/>
        <end position="184"/>
    </location>
</feature>
<feature type="helix" evidence="9">
    <location>
        <begin position="195"/>
        <end position="203"/>
    </location>
</feature>
<feature type="helix" evidence="9">
    <location>
        <begin position="207"/>
        <end position="214"/>
    </location>
</feature>
<feature type="helix" evidence="9">
    <location>
        <begin position="216"/>
        <end position="219"/>
    </location>
</feature>